<sequence length="942" mass="105909">MSRNASNAYLKNGNSTPSNDKRSPSSLSQRSKTSTRSSKPFLQRLFPSTWFKNESSSRHPLTSIKENDTQTIGRRPSMRVKLFGKDKSKASMSTNDLPSHPRSQSVMGFSSSTSQLTGTSNSSRTRLNKDMRRDFGMTSMSSITSSTPTPSQLPVRPSTSLSFFDDIPLGPSFSAETILSSLSISTSNNAMSKTTPAPPLVTTKSISADQDDFYTCKEEVSTYEGLNSQIELSPVKSRDSQNKSAKNLSTAYRTVSGESRNLMVDPKVSPYGNSRTPLRDSSNYLRDRRSINRQSSLSIPKSTSETTRKTLALSNGGIDQSRVSSDSFKVDDSSAKMAAIDIWEGSQHIVSNDKALSWLVTDKPYNKAVLKHYISLYDFENTDILQSLRMICGNLYVHGETQELDHFLGEFSNQWCRTNPKGLFCNPQIVHSIAFSLLLLNTDLHIAELSASERMSRNQFVENTYRSIKQALNDSFDGNEEKKNAFFLSSYKSFASNESCNSPAIHSLHGNLSPGKSAELKKLHKRSLSSKVLEEAFSSYWMSALKEMYHSIKVSMILQPDRYLDMNFDFNDTNKINNPSSTANQTRHFHSVSEIKKLPMGTDELEKSMVRPSTAMYINRQNENAVSIDKSRDLQGTVNTKEIRSRSALSYQNDRPLATDLPSVIYNHKHPNVVSPFYVHPYIKQGILKFQSKESHKFRKKEVWSTVLAVLQRDVFTLYNLNTPNLSYDPKDLDISKVGKPVIKTTIIASLAKPFPSSEDAVVLKSTNSLYFDLETSSQLKLRFAGPSPKDAQGWIDALNYWAARSSKVPLLGGVTNVDYGWARCTGQRAQKSNAQLLKTKTDKIIVHKWQPQPVNTIPSSLSLGEQLSAFNNFMKLLKKTNDEHQNLHKEMLVVLSSQPKSTFRRAVENWKYKSDYLQLNLVRLRVYISVLEKYKSQAQNS</sequence>
<proteinExistence type="predicted"/>
<keyword id="KW-1185">Reference proteome</keyword>
<evidence type="ECO:0000255" key="1">
    <source>
        <dbReference type="PROSITE-ProRule" id="PRU00145"/>
    </source>
</evidence>
<evidence type="ECO:0000255" key="2">
    <source>
        <dbReference type="PROSITE-ProRule" id="PRU00189"/>
    </source>
</evidence>
<evidence type="ECO:0000256" key="3">
    <source>
        <dbReference type="SAM" id="MobiDB-lite"/>
    </source>
</evidence>
<name>YDYB_SCHPO</name>
<reference key="1">
    <citation type="journal article" date="2002" name="Nature">
        <title>The genome sequence of Schizosaccharomyces pombe.</title>
        <authorList>
            <person name="Wood V."/>
            <person name="Gwilliam R."/>
            <person name="Rajandream M.A."/>
            <person name="Lyne M.H."/>
            <person name="Lyne R."/>
            <person name="Stewart A."/>
            <person name="Sgouros J.G."/>
            <person name="Peat N."/>
            <person name="Hayles J."/>
            <person name="Baker S.G."/>
            <person name="Basham D."/>
            <person name="Bowman S."/>
            <person name="Brooks K."/>
            <person name="Brown D."/>
            <person name="Brown S."/>
            <person name="Chillingworth T."/>
            <person name="Churcher C.M."/>
            <person name="Collins M."/>
            <person name="Connor R."/>
            <person name="Cronin A."/>
            <person name="Davis P."/>
            <person name="Feltwell T."/>
            <person name="Fraser A."/>
            <person name="Gentles S."/>
            <person name="Goble A."/>
            <person name="Hamlin N."/>
            <person name="Harris D.E."/>
            <person name="Hidalgo J."/>
            <person name="Hodgson G."/>
            <person name="Holroyd S."/>
            <person name="Hornsby T."/>
            <person name="Howarth S."/>
            <person name="Huckle E.J."/>
            <person name="Hunt S."/>
            <person name="Jagels K."/>
            <person name="James K.D."/>
            <person name="Jones L."/>
            <person name="Jones M."/>
            <person name="Leather S."/>
            <person name="McDonald S."/>
            <person name="McLean J."/>
            <person name="Mooney P."/>
            <person name="Moule S."/>
            <person name="Mungall K.L."/>
            <person name="Murphy L.D."/>
            <person name="Niblett D."/>
            <person name="Odell C."/>
            <person name="Oliver K."/>
            <person name="O'Neil S."/>
            <person name="Pearson D."/>
            <person name="Quail M.A."/>
            <person name="Rabbinowitsch E."/>
            <person name="Rutherford K.M."/>
            <person name="Rutter S."/>
            <person name="Saunders D."/>
            <person name="Seeger K."/>
            <person name="Sharp S."/>
            <person name="Skelton J."/>
            <person name="Simmonds M.N."/>
            <person name="Squares R."/>
            <person name="Squares S."/>
            <person name="Stevens K."/>
            <person name="Taylor K."/>
            <person name="Taylor R.G."/>
            <person name="Tivey A."/>
            <person name="Walsh S.V."/>
            <person name="Warren T."/>
            <person name="Whitehead S."/>
            <person name="Woodward J.R."/>
            <person name="Volckaert G."/>
            <person name="Aert R."/>
            <person name="Robben J."/>
            <person name="Grymonprez B."/>
            <person name="Weltjens I."/>
            <person name="Vanstreels E."/>
            <person name="Rieger M."/>
            <person name="Schaefer M."/>
            <person name="Mueller-Auer S."/>
            <person name="Gabel C."/>
            <person name="Fuchs M."/>
            <person name="Duesterhoeft A."/>
            <person name="Fritzc C."/>
            <person name="Holzer E."/>
            <person name="Moestl D."/>
            <person name="Hilbert H."/>
            <person name="Borzym K."/>
            <person name="Langer I."/>
            <person name="Beck A."/>
            <person name="Lehrach H."/>
            <person name="Reinhardt R."/>
            <person name="Pohl T.M."/>
            <person name="Eger P."/>
            <person name="Zimmermann W."/>
            <person name="Wedler H."/>
            <person name="Wambutt R."/>
            <person name="Purnelle B."/>
            <person name="Goffeau A."/>
            <person name="Cadieu E."/>
            <person name="Dreano S."/>
            <person name="Gloux S."/>
            <person name="Lelaure V."/>
            <person name="Mottier S."/>
            <person name="Galibert F."/>
            <person name="Aves S.J."/>
            <person name="Xiang Z."/>
            <person name="Hunt C."/>
            <person name="Moore K."/>
            <person name="Hurst S.M."/>
            <person name="Lucas M."/>
            <person name="Rochet M."/>
            <person name="Gaillardin C."/>
            <person name="Tallada V.A."/>
            <person name="Garzon A."/>
            <person name="Thode G."/>
            <person name="Daga R.R."/>
            <person name="Cruzado L."/>
            <person name="Jimenez J."/>
            <person name="Sanchez M."/>
            <person name="del Rey F."/>
            <person name="Benito J."/>
            <person name="Dominguez A."/>
            <person name="Revuelta J.L."/>
            <person name="Moreno S."/>
            <person name="Armstrong J."/>
            <person name="Forsburg S.L."/>
            <person name="Cerutti L."/>
            <person name="Lowe T."/>
            <person name="McCombie W.R."/>
            <person name="Paulsen I."/>
            <person name="Potashkin J."/>
            <person name="Shpakovski G.V."/>
            <person name="Ussery D."/>
            <person name="Barrell B.G."/>
            <person name="Nurse P."/>
        </authorList>
    </citation>
    <scope>NUCLEOTIDE SEQUENCE [LARGE SCALE GENOMIC DNA]</scope>
    <source>
        <strain>972 / ATCC 24843</strain>
    </source>
</reference>
<protein>
    <recommendedName>
        <fullName>PH and SEC7 domain-containing protein C11E3.11c</fullName>
    </recommendedName>
</protein>
<dbReference type="EMBL" id="CU329670">
    <property type="protein sequence ID" value="CAB11190.1"/>
    <property type="molecule type" value="Genomic_DNA"/>
</dbReference>
<dbReference type="PIR" id="T37539">
    <property type="entry name" value="T37539"/>
</dbReference>
<dbReference type="SMR" id="O13690"/>
<dbReference type="BioGRID" id="278276">
    <property type="interactions" value="5"/>
</dbReference>
<dbReference type="FunCoup" id="O13690">
    <property type="interactions" value="34"/>
</dbReference>
<dbReference type="STRING" id="284812.O13690"/>
<dbReference type="iPTMnet" id="O13690"/>
<dbReference type="SwissPalm" id="O13690"/>
<dbReference type="PaxDb" id="4896-SPAC11E3.11c.1"/>
<dbReference type="EnsemblFungi" id="SPAC11E3.11c.1">
    <property type="protein sequence ID" value="SPAC11E3.11c.1:pep"/>
    <property type="gene ID" value="SPAC11E3.11c"/>
</dbReference>
<dbReference type="KEGG" id="spo:2541783"/>
<dbReference type="PomBase" id="SPAC11E3.11c"/>
<dbReference type="VEuPathDB" id="FungiDB:SPAC11E3.11c"/>
<dbReference type="eggNOG" id="KOG0929">
    <property type="taxonomic scope" value="Eukaryota"/>
</dbReference>
<dbReference type="HOGENOM" id="CLU_323935_0_0_1"/>
<dbReference type="InParanoid" id="O13690"/>
<dbReference type="OMA" id="TRMLCSK"/>
<dbReference type="PhylomeDB" id="O13690"/>
<dbReference type="PRO" id="PR:O13690"/>
<dbReference type="Proteomes" id="UP000002485">
    <property type="component" value="Chromosome I"/>
</dbReference>
<dbReference type="GO" id="GO:0005938">
    <property type="term" value="C:cell cortex"/>
    <property type="evidence" value="ECO:0000314"/>
    <property type="project" value="PomBase"/>
</dbReference>
<dbReference type="GO" id="GO:0051285">
    <property type="term" value="C:cell cortex of cell tip"/>
    <property type="evidence" value="ECO:0000314"/>
    <property type="project" value="PomBase"/>
</dbReference>
<dbReference type="GO" id="GO:0032153">
    <property type="term" value="C:cell division site"/>
    <property type="evidence" value="ECO:0000314"/>
    <property type="project" value="PomBase"/>
</dbReference>
<dbReference type="GO" id="GO:0005085">
    <property type="term" value="F:guanyl-nucleotide exchange factor activity"/>
    <property type="evidence" value="ECO:0000315"/>
    <property type="project" value="PomBase"/>
</dbReference>
<dbReference type="GO" id="GO:0005547">
    <property type="term" value="F:phosphatidylinositol-3,4,5-trisphosphate binding"/>
    <property type="evidence" value="ECO:0000314"/>
    <property type="project" value="PomBase"/>
</dbReference>
<dbReference type="GO" id="GO:0051523">
    <property type="term" value="P:cell growth mode switching, monopolar to bipolar"/>
    <property type="evidence" value="ECO:0000315"/>
    <property type="project" value="PomBase"/>
</dbReference>
<dbReference type="GO" id="GO:0006886">
    <property type="term" value="P:intracellular protein transport"/>
    <property type="evidence" value="ECO:0000255"/>
    <property type="project" value="PomBase"/>
</dbReference>
<dbReference type="GO" id="GO:0010971">
    <property type="term" value="P:positive regulation of G2/M transition of mitotic cell cycle"/>
    <property type="evidence" value="ECO:0000315"/>
    <property type="project" value="PomBase"/>
</dbReference>
<dbReference type="GO" id="GO:0032012">
    <property type="term" value="P:regulation of ARF protein signal transduction"/>
    <property type="evidence" value="ECO:0007669"/>
    <property type="project" value="InterPro"/>
</dbReference>
<dbReference type="GO" id="GO:0023052">
    <property type="term" value="P:signaling"/>
    <property type="evidence" value="ECO:0000305"/>
    <property type="project" value="PomBase"/>
</dbReference>
<dbReference type="GO" id="GO:0016192">
    <property type="term" value="P:vesicle-mediated transport"/>
    <property type="evidence" value="ECO:0000255"/>
    <property type="project" value="PomBase"/>
</dbReference>
<dbReference type="CDD" id="cd00171">
    <property type="entry name" value="Sec7"/>
    <property type="match status" value="1"/>
</dbReference>
<dbReference type="Gene3D" id="1.10.1000.11">
    <property type="entry name" value="Arf Nucleotide-binding Site Opener,domain 2"/>
    <property type="match status" value="1"/>
</dbReference>
<dbReference type="Gene3D" id="2.30.29.30">
    <property type="entry name" value="Pleckstrin-homology domain (PH domain)/Phosphotyrosine-binding domain (PTB)"/>
    <property type="match status" value="1"/>
</dbReference>
<dbReference type="InterPro" id="IPR011993">
    <property type="entry name" value="PH-like_dom_sf"/>
</dbReference>
<dbReference type="InterPro" id="IPR041681">
    <property type="entry name" value="PH_9"/>
</dbReference>
<dbReference type="InterPro" id="IPR001849">
    <property type="entry name" value="PH_domain"/>
</dbReference>
<dbReference type="InterPro" id="IPR023394">
    <property type="entry name" value="Sec7_C_sf"/>
</dbReference>
<dbReference type="InterPro" id="IPR000904">
    <property type="entry name" value="Sec7_dom"/>
</dbReference>
<dbReference type="InterPro" id="IPR035999">
    <property type="entry name" value="Sec7_dom_sf"/>
</dbReference>
<dbReference type="PANTHER" id="PTHR10663">
    <property type="entry name" value="GUANYL-NUCLEOTIDE EXCHANGE FACTOR"/>
    <property type="match status" value="1"/>
</dbReference>
<dbReference type="PANTHER" id="PTHR10663:SF373">
    <property type="entry name" value="PH AND SEC7 DOMAIN-CONTAINING PROTEIN C11E3.11C"/>
    <property type="match status" value="1"/>
</dbReference>
<dbReference type="Pfam" id="PF15410">
    <property type="entry name" value="PH_9"/>
    <property type="match status" value="1"/>
</dbReference>
<dbReference type="Pfam" id="PF01369">
    <property type="entry name" value="Sec7"/>
    <property type="match status" value="1"/>
</dbReference>
<dbReference type="SMART" id="SM00233">
    <property type="entry name" value="PH"/>
    <property type="match status" value="1"/>
</dbReference>
<dbReference type="SMART" id="SM00222">
    <property type="entry name" value="Sec7"/>
    <property type="match status" value="1"/>
</dbReference>
<dbReference type="SUPFAM" id="SSF50729">
    <property type="entry name" value="PH domain-like"/>
    <property type="match status" value="1"/>
</dbReference>
<dbReference type="SUPFAM" id="SSF48425">
    <property type="entry name" value="Sec7 domain"/>
    <property type="match status" value="1"/>
</dbReference>
<dbReference type="PROSITE" id="PS50003">
    <property type="entry name" value="PH_DOMAIN"/>
    <property type="match status" value="1"/>
</dbReference>
<dbReference type="PROSITE" id="PS50190">
    <property type="entry name" value="SEC7"/>
    <property type="match status" value="1"/>
</dbReference>
<feature type="chain" id="PRO_0000317153" description="PH and SEC7 domain-containing protein C11E3.11c">
    <location>
        <begin position="1"/>
        <end position="942"/>
    </location>
</feature>
<feature type="domain" description="SEC7" evidence="2">
    <location>
        <begin position="295"/>
        <end position="497"/>
    </location>
</feature>
<feature type="domain" description="PH" evidence="1">
    <location>
        <begin position="681"/>
        <end position="804"/>
    </location>
</feature>
<feature type="region of interest" description="Disordered" evidence="3">
    <location>
        <begin position="1"/>
        <end position="128"/>
    </location>
</feature>
<feature type="region of interest" description="Disordered" evidence="3">
    <location>
        <begin position="259"/>
        <end position="308"/>
    </location>
</feature>
<feature type="compositionally biased region" description="Polar residues" evidence="3">
    <location>
        <begin position="1"/>
        <end position="18"/>
    </location>
</feature>
<feature type="compositionally biased region" description="Low complexity" evidence="3">
    <location>
        <begin position="24"/>
        <end position="40"/>
    </location>
</feature>
<feature type="compositionally biased region" description="Polar residues" evidence="3">
    <location>
        <begin position="50"/>
        <end position="60"/>
    </location>
</feature>
<feature type="compositionally biased region" description="Polar residues" evidence="3">
    <location>
        <begin position="90"/>
        <end position="125"/>
    </location>
</feature>
<feature type="compositionally biased region" description="Polar residues" evidence="3">
    <location>
        <begin position="271"/>
        <end position="284"/>
    </location>
</feature>
<feature type="compositionally biased region" description="Polar residues" evidence="3">
    <location>
        <begin position="292"/>
        <end position="305"/>
    </location>
</feature>
<accession>O13690</accession>
<organism>
    <name type="scientific">Schizosaccharomyces pombe (strain 972 / ATCC 24843)</name>
    <name type="common">Fission yeast</name>
    <dbReference type="NCBI Taxonomy" id="284812"/>
    <lineage>
        <taxon>Eukaryota</taxon>
        <taxon>Fungi</taxon>
        <taxon>Dikarya</taxon>
        <taxon>Ascomycota</taxon>
        <taxon>Taphrinomycotina</taxon>
        <taxon>Schizosaccharomycetes</taxon>
        <taxon>Schizosaccharomycetales</taxon>
        <taxon>Schizosaccharomycetaceae</taxon>
        <taxon>Schizosaccharomyces</taxon>
    </lineage>
</organism>
<gene>
    <name type="ORF">SPAC11E3.11c</name>
</gene>